<evidence type="ECO:0000250" key="1"/>
<evidence type="ECO:0000255" key="2"/>
<evidence type="ECO:0000255" key="3">
    <source>
        <dbReference type="PROSITE-ProRule" id="PRU01364"/>
    </source>
</evidence>
<evidence type="ECO:0000269" key="4">
    <source>
    </source>
</evidence>
<evidence type="ECO:0000269" key="5">
    <source>
    </source>
</evidence>
<evidence type="ECO:0000269" key="6">
    <source>
    </source>
</evidence>
<evidence type="ECO:0000269" key="7">
    <source>
    </source>
</evidence>
<evidence type="ECO:0000269" key="8">
    <source>
    </source>
</evidence>
<evidence type="ECO:0000269" key="9">
    <source>
    </source>
</evidence>
<evidence type="ECO:0000269" key="10">
    <source>
    </source>
</evidence>
<evidence type="ECO:0000305" key="11"/>
<feature type="chain" id="PRO_0000222213" description="Replication-associated protein">
    <location>
        <begin position="1"/>
        <end position="352"/>
    </location>
</feature>
<feature type="domain" description="CRESS-DNA virus Rep endonuclease" evidence="3">
    <location>
        <begin position="9"/>
        <end position="117"/>
    </location>
</feature>
<feature type="region of interest" description="Binding to RBR1">
    <location>
        <begin position="144"/>
        <end position="154"/>
    </location>
</feature>
<feature type="region of interest" description="Oligomerization">
    <location>
        <begin position="157"/>
        <end position="177"/>
    </location>
</feature>
<feature type="short sequence motif" description="RCR-1" evidence="3">
    <location>
        <begin position="16"/>
        <end position="19"/>
    </location>
</feature>
<feature type="short sequence motif" description="RCR-2" evidence="3">
    <location>
        <begin position="58"/>
        <end position="60"/>
    </location>
</feature>
<feature type="short sequence motif" description="RCR-3" evidence="3">
    <location>
        <begin position="104"/>
        <end position="107"/>
    </location>
</feature>
<feature type="active site" description="For DNA cleavage activity" evidence="3">
    <location>
        <position position="104"/>
    </location>
</feature>
<feature type="binding site" evidence="3">
    <location>
        <position position="50"/>
    </location>
    <ligand>
        <name>a divalent metal cation</name>
        <dbReference type="ChEBI" id="CHEBI:60240"/>
    </ligand>
</feature>
<feature type="binding site" evidence="3">
    <location>
        <position position="58"/>
    </location>
    <ligand>
        <name>a divalent metal cation</name>
        <dbReference type="ChEBI" id="CHEBI:60240"/>
    </ligand>
</feature>
<feature type="binding site" evidence="3">
    <location>
        <position position="60"/>
    </location>
    <ligand>
        <name>a divalent metal cation</name>
        <dbReference type="ChEBI" id="CHEBI:60240"/>
    </ligand>
</feature>
<feature type="binding site" evidence="3">
    <location>
        <position position="108"/>
    </location>
    <ligand>
        <name>a divalent metal cation</name>
        <dbReference type="ChEBI" id="CHEBI:60240"/>
    </ligand>
</feature>
<feature type="binding site" evidence="2">
    <location>
        <begin position="223"/>
        <end position="230"/>
    </location>
    <ligand>
        <name>ATP</name>
        <dbReference type="ChEBI" id="CHEBI:30616"/>
    </ligand>
</feature>
<feature type="mutagenesis site" description="58% loss of interaction with RBR. 33% loss of oligomerization." evidence="7">
    <original>K</original>
    <variation>A</variation>
    <location>
        <position position="144"/>
    </location>
</feature>
<feature type="mutagenesis site" description="14% loss of interaction with RBR. No effect on oligomerization." evidence="7">
    <original>E</original>
    <variation>A</variation>
    <location>
        <position position="145"/>
    </location>
</feature>
<feature type="mutagenesis site" description="No effect on the interaction with RBR. No effect on oligomerization." evidence="7">
    <original>E</original>
    <variation>A</variation>
    <location>
        <position position="146"/>
    </location>
</feature>
<feature type="mutagenesis site" description="54% loss of interaction with RBR. Almost complete loss of oligomerization." evidence="7">
    <original>A</original>
    <variation>Y</variation>
    <location>
        <position position="147"/>
    </location>
</feature>
<feature type="mutagenesis site" description="64% loss of interaction with RBR. 25% loss of oligomerization." evidence="7">
    <original>L</original>
    <variation>G</variation>
    <location>
        <position position="148"/>
    </location>
</feature>
<feature type="mutagenesis site" description="32% loss of interaction with RBR. Almost no effect on oligomerization." evidence="7">
    <original>L</original>
    <variation>I</variation>
    <location>
        <position position="148"/>
    </location>
</feature>
<feature type="mutagenesis site" description="No loss of interaction with RBR. No effect on oligomerization." evidence="7">
    <original>L</original>
    <variation>M</variation>
    <location>
        <position position="148"/>
    </location>
</feature>
<feature type="mutagenesis site" description="69% loss of interaction with RBR. 25% loss of oligomerization." evidence="7">
    <original>L</original>
    <variation>V</variation>
    <location>
        <position position="148"/>
    </location>
</feature>
<organismHost>
    <name type="scientific">Solanum lycopersicum</name>
    <name type="common">Tomato</name>
    <name type="synonym">Lycopersicon esculentum</name>
    <dbReference type="NCBI Taxonomy" id="4081"/>
</organismHost>
<accession>P03567</accession>
<proteinExistence type="evidence at protein level"/>
<organism>
    <name type="scientific">Tomato golden mosaic virus (strain Yellow vein)</name>
    <name type="common">TGMV</name>
    <dbReference type="NCBI Taxonomy" id="223341"/>
    <lineage>
        <taxon>Viruses</taxon>
        <taxon>Monodnaviria</taxon>
        <taxon>Shotokuvirae</taxon>
        <taxon>Cressdnaviricota</taxon>
        <taxon>Repensiviricetes</taxon>
        <taxon>Geplafuvirales</taxon>
        <taxon>Geminiviridae</taxon>
        <taxon>Begomovirus</taxon>
        <taxon>Tomato golden mosaic virus</taxon>
    </lineage>
</organism>
<name>REP_TGMVY</name>
<protein>
    <recommendedName>
        <fullName>Replication-associated protein</fullName>
        <shortName>Rep</shortName>
        <ecNumber>2.7.7.-</ecNumber>
        <ecNumber>3.1.21.-</ecNumber>
    </recommendedName>
    <alternativeName>
        <fullName>Protein AC1</fullName>
    </alternativeName>
    <alternativeName>
        <fullName>Protein AL1</fullName>
    </alternativeName>
</protein>
<gene>
    <name type="ORF">AC1</name>
    <name type="ORF">AL1</name>
</gene>
<keyword id="KW-0067">ATP-binding</keyword>
<keyword id="KW-0190">Covalent protein-DNA linkage</keyword>
<keyword id="KW-0235">DNA replication</keyword>
<keyword id="KW-0238">DNA-binding</keyword>
<keyword id="KW-0255">Endonuclease</keyword>
<keyword id="KW-0347">Helicase</keyword>
<keyword id="KW-1048">Host nucleus</keyword>
<keyword id="KW-0945">Host-virus interaction</keyword>
<keyword id="KW-0378">Hydrolase</keyword>
<keyword id="KW-0479">Metal-binding</keyword>
<keyword id="KW-0511">Multifunctional enzyme</keyword>
<keyword id="KW-0540">Nuclease</keyword>
<keyword id="KW-0547">Nucleotide-binding</keyword>
<keyword id="KW-0548">Nucleotidyltransferase</keyword>
<keyword id="KW-1185">Reference proteome</keyword>
<keyword id="KW-0808">Transferase</keyword>
<reference key="1">
    <citation type="journal article" date="1984" name="EMBO J.">
        <title>Complete nucleotide sequence of the infectious cloned DNA components of tomato golden mosaic virus: potential coding regions and regulatory sequences.</title>
        <authorList>
            <person name="Hamilton W.D.O."/>
            <person name="Stein V.E."/>
            <person name="Coutts R.H.A."/>
            <person name="Buck K.W."/>
        </authorList>
    </citation>
    <scope>NUCLEOTIDE SEQUENCE [GENOMIC DNA]</scope>
</reference>
<reference key="2">
    <citation type="journal article" date="1997" name="Mol. Cell. Biol.">
        <title>RRB1 and RRB2 encode maize retinoblastoma-related proteins that interact with a plant D-type cyclin and geminivirus replication protein.</title>
        <authorList>
            <person name="Ach R.A."/>
            <person name="Durfee T."/>
            <person name="Miller A.B."/>
            <person name="Taranto P."/>
            <person name="Hanley-Bowdoin L."/>
            <person name="Zambryski P.C."/>
            <person name="Gruissem W."/>
        </authorList>
    </citation>
    <scope>INTERACTION WITH ZEA MAYS RBR1</scope>
</reference>
<reference key="3">
    <citation type="journal article" date="1996" name="J. Virol.">
        <title>Interactions between geminivirus replication proteins.</title>
        <authorList>
            <person name="Settlage S.B."/>
            <person name="Miller A.B."/>
            <person name="Hanley-Bowdoin L."/>
        </authorList>
    </citation>
    <scope>SUBUNIT</scope>
    <scope>INTERACTION WITH THE REPLICATION ENHANCER PROTEIN</scope>
</reference>
<reference key="4">
    <citation type="journal article" date="2000" name="EMBO J.">
        <title>A geminivirus replication protein interacts with the retinoblastoma protein through a novel domain to determine symptoms and tissue specificity of infection in plants.</title>
        <authorList>
            <person name="Kong L.-J."/>
            <person name="Orozco B.M."/>
            <person name="Roe J.L."/>
            <person name="Nagar S."/>
            <person name="Ou S."/>
            <person name="Feiler H.S."/>
            <person name="Durfee T."/>
            <person name="Miller A.B."/>
            <person name="Gruissem W."/>
            <person name="Robertson D."/>
            <person name="Hanley-Bowdoin L."/>
        </authorList>
    </citation>
    <scope>INTERACTION WITH ZEA MAYS RBR1 AND ARABIDOPSIS RBR1</scope>
</reference>
<reference key="5">
    <citation type="journal article" date="2000" name="J. Biol. Chem.">
        <title>The multifunctional character of a geminivirus replication protein is reflected by its complex oligomerization properties.</title>
        <authorList>
            <person name="Orozco B.M."/>
            <person name="Kong L.-J."/>
            <person name="Batts L.A."/>
            <person name="Elledge S."/>
            <person name="Hanley-Bowdoin L."/>
        </authorList>
    </citation>
    <scope>SUBUNIT</scope>
</reference>
<reference key="6">
    <citation type="journal article" date="2002" name="Plant Cell">
        <title>A geminivirus replication protein interacts with a protein kinase and a motor protein that display different expression patterns during plant development and infection.</title>
        <authorList>
            <person name="Kong L.-J."/>
            <person name="Hanley-Bowdoin L."/>
        </authorList>
    </citation>
    <scope>INTERACTION WITH ARABIDOPSIS THALIANA GRIK1; GRIMP AND HISTONE H3</scope>
</reference>
<reference key="7">
    <citation type="journal article" date="2004" name="J. Virol.">
        <title>A novel motif in geminivirus replication proteins interacts with the plant retinoblastoma-related protein.</title>
        <authorList>
            <person name="Arguello-Astorga G."/>
            <person name="Lopez-Ochoa L."/>
            <person name="Kong L.-J."/>
            <person name="Orozco B.M."/>
            <person name="Settlage S.B."/>
            <person name="Hanley-Bowdoin L."/>
        </authorList>
    </citation>
    <scope>INTERACTION WITH ZEA MAYS RBR1</scope>
    <scope>MUTAGENESIS OF LYS-144; GLU-145; GLU-146; ALA-147 AND LEU-148</scope>
</reference>
<reference key="8">
    <citation type="journal article" date="2006" name="Plant Physiol.">
        <title>Geminivirus infection up-regulates the expression of two Arabidopsis protein kinases related to yeast SNF1- and mammalian AMPK-activating kinases.</title>
        <authorList>
            <person name="Shen W."/>
            <person name="Hanley-Bowdoin L."/>
        </authorList>
    </citation>
    <scope>INTERACTION WITH ARABIDOPSIS THALIANA GRIK1 AND GRIK2</scope>
</reference>
<comment type="function">
    <text evidence="1">Essential for the replication of viral ssDNA. The closed circular ssDNA genome is first converted to a superhelical dsDNA. Rep binds a specific region at the genome origin of replication. It introduces an endonucleolytic nick within the conserved sequence 5'-TAATATTAC-3' in the intergenic region of the genome present in all geminiviruses, thereby initiating the rolling circle replication (RCR). Following cleavage, binds covalently to the 5'-phosphate of DNA as a tyrosyl ester. The cleavage gives rise to a free 3'-OH that serves as a primer for the cellular DNA polymerase. The polymerase synthesizes the (+) strand DNA by rolling circle mechanism. After one round of replication, a Rep-catalyzed nucleotidyl transfer reaction releases a circular single-stranded virus genome, thereby terminating the replication. Displays origin-specific DNA cleavage, nucleotidyl transferase, ATPase and helicase activities (By similarity).</text>
</comment>
<comment type="cofactor">
    <cofactor evidence="3">
        <name>Mg(2+)</name>
        <dbReference type="ChEBI" id="CHEBI:18420"/>
    </cofactor>
    <cofactor evidence="3">
        <name>Mn(2+)</name>
        <dbReference type="ChEBI" id="CHEBI:29035"/>
    </cofactor>
    <text evidence="3">Divalent metal cations, possibly Mg(2+) or Mn(2+).</text>
</comment>
<comment type="subunit">
    <text evidence="1 4 5 6 7 8 9 10">Homooligomer. Interacts with the replication enhancer protein (REn). Interacts with host retinoblastoma-related protein 1 (RBR1), and may thereby induce the transcription of host replicative enzymes even if the cell is not dividing anymore. Interacts with host PCNA. Interacts with host SCE1 protein (By similarity). Interacts with host GRIK1, GRIK2, GRIMP and histone H3.</text>
</comment>
<comment type="subcellular location">
    <subcellularLocation>
        <location evidence="1">Host nucleus</location>
    </subcellularLocation>
</comment>
<comment type="domain">
    <text evidence="1">There are 3 rolling circle replication (RCR) motifs. RCR-2 is probably involved in metal coordination. RCR-3 is required for phosphodiester bond cleavage for initiation of RCR (By similarity).</text>
</comment>
<comment type="similarity">
    <text evidence="11">Belongs to the geminiviridae Rep protein family.</text>
</comment>
<sequence length="352" mass="40332">MPSHPKRFQINAKNYFLTYPQCSLSKEESLSQLQALNTPINKKFIKICRELHEDGQPHLHVLIQFEGKYCCQNQRFFDLVSPTRSAHFHPNIQRAKSSSDVKTYIDKDGDTLVWGEFQVDGRSARGGCQTSNDAAAEALNASSKEEALQIIREKIPEKYLFQFHNLNSNLDRIFDKTPEPWLPPFHVSSFTNVPDEMRQWAENYFGKSSAARPERPISIIIEGDSRTGKTMWARSLGPHNYLSGHLDLNSRVYSNKVEYNVIDDVTPQYLKLKHWKELIGAQRDWQTNCKYGKPVQIKGGIPSIVLCNPGEGASYKVFLDKEENTPLKNWTFHNAKFVFLNSPLYQSSTQSS</sequence>
<dbReference type="EC" id="2.7.7.-"/>
<dbReference type="EC" id="3.1.21.-"/>
<dbReference type="EMBL" id="K02029">
    <property type="status" value="NOT_ANNOTATED_CDS"/>
    <property type="molecule type" value="Genomic_DNA"/>
</dbReference>
<dbReference type="PIR" id="A04170">
    <property type="entry name" value="QQCVL1"/>
</dbReference>
<dbReference type="SMR" id="P03567"/>
<dbReference type="IntAct" id="P03567">
    <property type="interactions" value="2"/>
</dbReference>
<dbReference type="Proteomes" id="UP000007405">
    <property type="component" value="Genome"/>
</dbReference>
<dbReference type="GO" id="GO:0042025">
    <property type="term" value="C:host cell nucleus"/>
    <property type="evidence" value="ECO:0007669"/>
    <property type="project" value="UniProtKB-SubCell"/>
</dbReference>
<dbReference type="GO" id="GO:0005524">
    <property type="term" value="F:ATP binding"/>
    <property type="evidence" value="ECO:0007669"/>
    <property type="project" value="UniProtKB-KW"/>
</dbReference>
<dbReference type="GO" id="GO:0003677">
    <property type="term" value="F:DNA binding"/>
    <property type="evidence" value="ECO:0007669"/>
    <property type="project" value="UniProtKB-KW"/>
</dbReference>
<dbReference type="GO" id="GO:0016888">
    <property type="term" value="F:endodeoxyribonuclease activity, producing 5'-phosphomonoesters"/>
    <property type="evidence" value="ECO:0007669"/>
    <property type="project" value="InterPro"/>
</dbReference>
<dbReference type="GO" id="GO:0004386">
    <property type="term" value="F:helicase activity"/>
    <property type="evidence" value="ECO:0007669"/>
    <property type="project" value="UniProtKB-KW"/>
</dbReference>
<dbReference type="GO" id="GO:0046872">
    <property type="term" value="F:metal ion binding"/>
    <property type="evidence" value="ECO:0007669"/>
    <property type="project" value="UniProtKB-KW"/>
</dbReference>
<dbReference type="GO" id="GO:0016779">
    <property type="term" value="F:nucleotidyltransferase activity"/>
    <property type="evidence" value="ECO:0007669"/>
    <property type="project" value="UniProtKB-KW"/>
</dbReference>
<dbReference type="GO" id="GO:0005198">
    <property type="term" value="F:structural molecule activity"/>
    <property type="evidence" value="ECO:0007669"/>
    <property type="project" value="InterPro"/>
</dbReference>
<dbReference type="GO" id="GO:0006260">
    <property type="term" value="P:DNA replication"/>
    <property type="evidence" value="ECO:0007669"/>
    <property type="project" value="UniProtKB-KW"/>
</dbReference>
<dbReference type="GO" id="GO:0039684">
    <property type="term" value="P:rolling circle single-stranded viral DNA replication"/>
    <property type="evidence" value="ECO:0000314"/>
    <property type="project" value="UniProtKB"/>
</dbReference>
<dbReference type="FunFam" id="3.40.1310.20:FF:000001">
    <property type="entry name" value="Replication-associated protein"/>
    <property type="match status" value="1"/>
</dbReference>
<dbReference type="Gene3D" id="3.40.1310.20">
    <property type="match status" value="1"/>
</dbReference>
<dbReference type="InterPro" id="IPR049912">
    <property type="entry name" value="CRESS_DNA_REP"/>
</dbReference>
<dbReference type="InterPro" id="IPR001301">
    <property type="entry name" value="Gemini_AL1_CLV"/>
</dbReference>
<dbReference type="InterPro" id="IPR001191">
    <property type="entry name" value="Gemini_AL1_REP"/>
</dbReference>
<dbReference type="InterPro" id="IPR022692">
    <property type="entry name" value="Gemini_AL1_REP_central"/>
</dbReference>
<dbReference type="Pfam" id="PF00799">
    <property type="entry name" value="Gemini_AL1"/>
    <property type="match status" value="1"/>
</dbReference>
<dbReference type="Pfam" id="PF08283">
    <property type="entry name" value="Gemini_AL1_M"/>
    <property type="match status" value="1"/>
</dbReference>
<dbReference type="PRINTS" id="PR00227">
    <property type="entry name" value="GEMCOATAL1"/>
</dbReference>
<dbReference type="PRINTS" id="PR00228">
    <property type="entry name" value="GEMCOATCLVL1"/>
</dbReference>
<dbReference type="SUPFAM" id="SSF55464">
    <property type="entry name" value="Origin of replication-binding domain, RBD-like"/>
    <property type="match status" value="1"/>
</dbReference>
<dbReference type="PROSITE" id="PS52020">
    <property type="entry name" value="CRESS_DNA_REP"/>
    <property type="match status" value="1"/>
</dbReference>